<accession>Q9UBD9</accession>
<accession>B4DNT4</accession>
<accession>Q6NZA4</accession>
<name>CLCF1_HUMAN</name>
<keyword id="KW-0002">3D-structure</keyword>
<keyword id="KW-0025">Alternative splicing</keyword>
<keyword id="KW-0202">Cytokine</keyword>
<keyword id="KW-0225">Disease variant</keyword>
<keyword id="KW-0325">Glycoprotein</keyword>
<keyword id="KW-1267">Proteomics identification</keyword>
<keyword id="KW-1185">Reference proteome</keyword>
<keyword id="KW-0964">Secreted</keyword>
<keyword id="KW-0732">Signal</keyword>
<dbReference type="EMBL" id="AF176911">
    <property type="protein sequence ID" value="AAF00991.1"/>
    <property type="molecule type" value="mRNA"/>
</dbReference>
<dbReference type="EMBL" id="AF176912">
    <property type="protein sequence ID" value="AAF00992.1"/>
    <property type="molecule type" value="Genomic_DNA"/>
</dbReference>
<dbReference type="EMBL" id="AF172854">
    <property type="protein sequence ID" value="AAD54284.1"/>
    <property type="molecule type" value="mRNA"/>
</dbReference>
<dbReference type="EMBL" id="AY049779">
    <property type="protein sequence ID" value="AAL15436.1"/>
    <property type="molecule type" value="mRNA"/>
</dbReference>
<dbReference type="EMBL" id="AK298052">
    <property type="protein sequence ID" value="BAG60346.1"/>
    <property type="molecule type" value="mRNA"/>
</dbReference>
<dbReference type="EMBL" id="AP003419">
    <property type="status" value="NOT_ANNOTATED_CDS"/>
    <property type="molecule type" value="Genomic_DNA"/>
</dbReference>
<dbReference type="EMBL" id="CH471076">
    <property type="protein sequence ID" value="EAW74601.1"/>
    <property type="molecule type" value="Genomic_DNA"/>
</dbReference>
<dbReference type="EMBL" id="BC012939">
    <property type="protein sequence ID" value="AAH12939.1"/>
    <property type="molecule type" value="mRNA"/>
</dbReference>
<dbReference type="EMBL" id="BC066229">
    <property type="protein sequence ID" value="AAH66229.1"/>
    <property type="molecule type" value="mRNA"/>
</dbReference>
<dbReference type="EMBL" id="BC066230">
    <property type="protein sequence ID" value="AAH66230.1"/>
    <property type="molecule type" value="mRNA"/>
</dbReference>
<dbReference type="EMBL" id="BC066231">
    <property type="protein sequence ID" value="AAH66231.1"/>
    <property type="molecule type" value="mRNA"/>
</dbReference>
<dbReference type="CCDS" id="CCDS31617.1">
    <molecule id="Q9UBD9-1"/>
</dbReference>
<dbReference type="CCDS" id="CCDS53666.1">
    <molecule id="Q9UBD9-2"/>
</dbReference>
<dbReference type="RefSeq" id="NP_001159684.1">
    <molecule id="Q9UBD9-2"/>
    <property type="nucleotide sequence ID" value="NM_001166212.2"/>
</dbReference>
<dbReference type="RefSeq" id="NP_037378.1">
    <molecule id="Q9UBD9-1"/>
    <property type="nucleotide sequence ID" value="NM_013246.3"/>
</dbReference>
<dbReference type="PDB" id="8D7H">
    <property type="method" value="EM"/>
    <property type="resolution" value="3.40 A"/>
    <property type="chains" value="D/H=28-225"/>
</dbReference>
<dbReference type="PDB" id="8D7R">
    <property type="method" value="EM"/>
    <property type="resolution" value="3.90 A"/>
    <property type="chains" value="D=28-225"/>
</dbReference>
<dbReference type="PDBsum" id="8D7H"/>
<dbReference type="PDBsum" id="8D7R"/>
<dbReference type="EMDB" id="EMD-27230"/>
<dbReference type="EMDB" id="EMD-27231"/>
<dbReference type="SMR" id="Q9UBD9"/>
<dbReference type="BioGRID" id="117075">
    <property type="interactions" value="42"/>
</dbReference>
<dbReference type="CORUM" id="Q9UBD9"/>
<dbReference type="DIP" id="DIP-61204N"/>
<dbReference type="FunCoup" id="Q9UBD9">
    <property type="interactions" value="410"/>
</dbReference>
<dbReference type="IntAct" id="Q9UBD9">
    <property type="interactions" value="7"/>
</dbReference>
<dbReference type="STRING" id="9606.ENSP00000309338"/>
<dbReference type="GlyCosmos" id="Q9UBD9">
    <property type="glycosylation" value="1 site, No reported glycans"/>
</dbReference>
<dbReference type="GlyGen" id="Q9UBD9">
    <property type="glycosylation" value="1 site"/>
</dbReference>
<dbReference type="iPTMnet" id="Q9UBD9"/>
<dbReference type="PhosphoSitePlus" id="Q9UBD9"/>
<dbReference type="BioMuta" id="CLCF1"/>
<dbReference type="DMDM" id="56404673"/>
<dbReference type="MassIVE" id="Q9UBD9"/>
<dbReference type="PaxDb" id="9606-ENSP00000309338"/>
<dbReference type="PeptideAtlas" id="Q9UBD9"/>
<dbReference type="ProteomicsDB" id="4723"/>
<dbReference type="ProteomicsDB" id="83951">
    <molecule id="Q9UBD9-1"/>
</dbReference>
<dbReference type="Antibodypedia" id="44555">
    <property type="antibodies" value="247 antibodies from 26 providers"/>
</dbReference>
<dbReference type="DNASU" id="23529"/>
<dbReference type="Ensembl" id="ENST00000312438.8">
    <molecule id="Q9UBD9-1"/>
    <property type="protein sequence ID" value="ENSP00000309338.7"/>
    <property type="gene ID" value="ENSG00000175505.11"/>
</dbReference>
<dbReference type="Ensembl" id="ENST00000533438.1">
    <molecule id="Q9UBD9-2"/>
    <property type="protein sequence ID" value="ENSP00000434122.1"/>
    <property type="gene ID" value="ENSG00000175505.11"/>
</dbReference>
<dbReference type="GeneID" id="23529"/>
<dbReference type="KEGG" id="hsa:23529"/>
<dbReference type="MANE-Select" id="ENST00000312438.8">
    <property type="protein sequence ID" value="ENSP00000309338.7"/>
    <property type="RefSeq nucleotide sequence ID" value="NM_013246.3"/>
    <property type="RefSeq protein sequence ID" value="NP_037378.1"/>
</dbReference>
<dbReference type="UCSC" id="uc001okq.4">
    <molecule id="Q9UBD9-1"/>
    <property type="organism name" value="human"/>
</dbReference>
<dbReference type="AGR" id="HGNC:17412"/>
<dbReference type="CTD" id="23529"/>
<dbReference type="DisGeNET" id="23529"/>
<dbReference type="GeneCards" id="CLCF1"/>
<dbReference type="GeneReviews" id="CLCF1"/>
<dbReference type="HGNC" id="HGNC:17412">
    <property type="gene designation" value="CLCF1"/>
</dbReference>
<dbReference type="HPA" id="ENSG00000175505">
    <property type="expression patterns" value="Low tissue specificity"/>
</dbReference>
<dbReference type="MalaCards" id="CLCF1"/>
<dbReference type="MIM" id="607672">
    <property type="type" value="gene"/>
</dbReference>
<dbReference type="MIM" id="610313">
    <property type="type" value="phenotype"/>
</dbReference>
<dbReference type="neXtProt" id="NX_Q9UBD9"/>
<dbReference type="OpenTargets" id="ENSG00000175505"/>
<dbReference type="Orphanet" id="157820">
    <property type="disease" value="Cold-induced sweating syndrome"/>
</dbReference>
<dbReference type="Orphanet" id="1545">
    <property type="disease" value="Crisponi syndrome"/>
</dbReference>
<dbReference type="PharmGKB" id="PA142672106"/>
<dbReference type="VEuPathDB" id="HostDB:ENSG00000175505"/>
<dbReference type="eggNOG" id="ENOG502QUIA">
    <property type="taxonomic scope" value="Eukaryota"/>
</dbReference>
<dbReference type="GeneTree" id="ENSGT00510000048856"/>
<dbReference type="HOGENOM" id="CLU_079382_0_0_1"/>
<dbReference type="InParanoid" id="Q9UBD9"/>
<dbReference type="OMA" id="WRSLNDN"/>
<dbReference type="OrthoDB" id="8956155at2759"/>
<dbReference type="PAN-GO" id="Q9UBD9">
    <property type="GO annotations" value="6 GO annotations based on evolutionary models"/>
</dbReference>
<dbReference type="PhylomeDB" id="Q9UBD9"/>
<dbReference type="TreeFam" id="TF333266"/>
<dbReference type="PathwayCommons" id="Q9UBD9"/>
<dbReference type="Reactome" id="R-HSA-6788467">
    <property type="pathway name" value="IL-6-type cytokine receptor ligand interactions"/>
</dbReference>
<dbReference type="SignaLink" id="Q9UBD9"/>
<dbReference type="SIGNOR" id="Q9UBD9"/>
<dbReference type="BioGRID-ORCS" id="23529">
    <property type="hits" value="12 hits in 1160 CRISPR screens"/>
</dbReference>
<dbReference type="ChiTaRS" id="CLCF1">
    <property type="organism name" value="human"/>
</dbReference>
<dbReference type="GeneWiki" id="CLCF1"/>
<dbReference type="GenomeRNAi" id="23529"/>
<dbReference type="Pharos" id="Q9UBD9">
    <property type="development level" value="Tbio"/>
</dbReference>
<dbReference type="PRO" id="PR:Q9UBD9"/>
<dbReference type="Proteomes" id="UP000005640">
    <property type="component" value="Chromosome 11"/>
</dbReference>
<dbReference type="RNAct" id="Q9UBD9">
    <property type="molecule type" value="protein"/>
</dbReference>
<dbReference type="Bgee" id="ENSG00000175505">
    <property type="expression patterns" value="Expressed in left uterine tube and 123 other cell types or tissues"/>
</dbReference>
<dbReference type="GO" id="GO:0097059">
    <property type="term" value="C:CNTFR-CLCF1 complex"/>
    <property type="evidence" value="ECO:0000314"/>
    <property type="project" value="BHF-UCL"/>
</dbReference>
<dbReference type="GO" id="GO:0097058">
    <property type="term" value="C:CRLF-CLCF1 complex"/>
    <property type="evidence" value="ECO:0000314"/>
    <property type="project" value="BHF-UCL"/>
</dbReference>
<dbReference type="GO" id="GO:0005576">
    <property type="term" value="C:extracellular region"/>
    <property type="evidence" value="ECO:0000314"/>
    <property type="project" value="BHF-UCL"/>
</dbReference>
<dbReference type="GO" id="GO:0005615">
    <property type="term" value="C:extracellular space"/>
    <property type="evidence" value="ECO:0007669"/>
    <property type="project" value="UniProtKB-KW"/>
</dbReference>
<dbReference type="GO" id="GO:0005127">
    <property type="term" value="F:ciliary neurotrophic factor receptor binding"/>
    <property type="evidence" value="ECO:0000314"/>
    <property type="project" value="BHF-UCL"/>
</dbReference>
<dbReference type="GO" id="GO:0005125">
    <property type="term" value="F:cytokine activity"/>
    <property type="evidence" value="ECO:0000303"/>
    <property type="project" value="UniProtKB"/>
</dbReference>
<dbReference type="GO" id="GO:0008083">
    <property type="term" value="F:growth factor activity"/>
    <property type="evidence" value="ECO:0000304"/>
    <property type="project" value="HGNC-UCL"/>
</dbReference>
<dbReference type="GO" id="GO:0005102">
    <property type="term" value="F:signaling receptor binding"/>
    <property type="evidence" value="ECO:0000353"/>
    <property type="project" value="HGNC-UCL"/>
</dbReference>
<dbReference type="GO" id="GO:0030183">
    <property type="term" value="P:B cell differentiation"/>
    <property type="evidence" value="ECO:0000250"/>
    <property type="project" value="BHF-UCL"/>
</dbReference>
<dbReference type="GO" id="GO:0007166">
    <property type="term" value="P:cell surface receptor signaling pathway"/>
    <property type="evidence" value="ECO:0000250"/>
    <property type="project" value="BHF-UCL"/>
</dbReference>
<dbReference type="GO" id="GO:0007259">
    <property type="term" value="P:cell surface receptor signaling pathway via JAK-STAT"/>
    <property type="evidence" value="ECO:0000250"/>
    <property type="project" value="BHF-UCL"/>
</dbReference>
<dbReference type="GO" id="GO:0097696">
    <property type="term" value="P:cell surface receptor signaling pathway via STAT"/>
    <property type="evidence" value="ECO:0000314"/>
    <property type="project" value="ARUK-UCL"/>
</dbReference>
<dbReference type="GO" id="GO:0019221">
    <property type="term" value="P:cytokine-mediated signaling pathway"/>
    <property type="evidence" value="ECO:0000303"/>
    <property type="project" value="UniProtKB"/>
</dbReference>
<dbReference type="GO" id="GO:0043524">
    <property type="term" value="P:negative regulation of neuron apoptotic process"/>
    <property type="evidence" value="ECO:0000314"/>
    <property type="project" value="BHF-UCL"/>
</dbReference>
<dbReference type="GO" id="GO:0048711">
    <property type="term" value="P:positive regulation of astrocyte differentiation"/>
    <property type="evidence" value="ECO:0000250"/>
    <property type="project" value="BHF-UCL"/>
</dbReference>
<dbReference type="GO" id="GO:0030890">
    <property type="term" value="P:positive regulation of B cell proliferation"/>
    <property type="evidence" value="ECO:0000250"/>
    <property type="project" value="BHF-UCL"/>
</dbReference>
<dbReference type="GO" id="GO:0008284">
    <property type="term" value="P:positive regulation of cell population proliferation"/>
    <property type="evidence" value="ECO:0000314"/>
    <property type="project" value="BHF-UCL"/>
</dbReference>
<dbReference type="GO" id="GO:0002639">
    <property type="term" value="P:positive regulation of immunoglobulin production"/>
    <property type="evidence" value="ECO:0000250"/>
    <property type="project" value="BHF-UCL"/>
</dbReference>
<dbReference type="GO" id="GO:0048295">
    <property type="term" value="P:positive regulation of isotype switching to IgE isotypes"/>
    <property type="evidence" value="ECO:0000250"/>
    <property type="project" value="BHF-UCL"/>
</dbReference>
<dbReference type="FunFam" id="1.20.1250.10:FF:000005">
    <property type="entry name" value="cardiotrophin-like cytokine factor 1"/>
    <property type="match status" value="1"/>
</dbReference>
<dbReference type="Gene3D" id="1.20.1250.10">
    <property type="match status" value="1"/>
</dbReference>
<dbReference type="InterPro" id="IPR009079">
    <property type="entry name" value="4_helix_cytokine-like_core"/>
</dbReference>
<dbReference type="InterPro" id="IPR010681">
    <property type="entry name" value="PRF/CT"/>
</dbReference>
<dbReference type="PANTHER" id="PTHR21353">
    <property type="match status" value="1"/>
</dbReference>
<dbReference type="PANTHER" id="PTHR21353:SF7">
    <property type="entry name" value="CARDIOTROPHIN-LIKE CYTOKINE FACTOR 1"/>
    <property type="match status" value="1"/>
</dbReference>
<dbReference type="Pfam" id="PF06875">
    <property type="entry name" value="PRF"/>
    <property type="match status" value="1"/>
</dbReference>
<dbReference type="SUPFAM" id="SSF47266">
    <property type="entry name" value="4-helical cytokines"/>
    <property type="match status" value="1"/>
</dbReference>
<reference key="1">
    <citation type="journal article" date="1999" name="Proc. Natl. Acad. Sci. U.S.A.">
        <title>Novel neurotrophin-1/B cell-stimulating factor-3: a cytokine of the IL-6 family.</title>
        <authorList>
            <person name="Senaldi G."/>
            <person name="Varnum B.C."/>
            <person name="Sarmiento U."/>
            <person name="Starnes C."/>
            <person name="Lile J."/>
            <person name="Scully S."/>
            <person name="Guo J."/>
            <person name="Elliott G."/>
            <person name="McNinch J."/>
            <person name="Shaklee C.L."/>
            <person name="Freeman D."/>
            <person name="Manu F."/>
            <person name="Simonet W.S."/>
            <person name="Boone T."/>
            <person name="Chang M.-S."/>
        </authorList>
    </citation>
    <scope>NUCLEOTIDE SEQUENCE [GENOMIC DNA / MRNA] (ISOFORM 1)</scope>
    <scope>FUNCTION</scope>
    <scope>TISSUE SPECIFICITY</scope>
</reference>
<reference key="2">
    <citation type="journal article" date="1999" name="Biochem. Biophys. Res. Commun.">
        <title>Computational EST database analysis identifies a novel member of the neuropoietic cytokine family.</title>
        <authorList>
            <person name="Shi Y."/>
            <person name="Wang W."/>
            <person name="Yourey P.A."/>
            <person name="Gohari S."/>
            <person name="Zukauskas D."/>
            <person name="Zhang J."/>
            <person name="Ruben S."/>
            <person name="Alderson R.F."/>
        </authorList>
    </citation>
    <scope>NUCLEOTIDE SEQUENCE [MRNA] (ISOFORM 1)</scope>
    <scope>FUNCTION</scope>
    <scope>TISSUE SPECIFICITY</scope>
</reference>
<reference key="3">
    <citation type="submission" date="2001-07" db="EMBL/GenBank/DDBJ databases">
        <authorList>
            <person name="Hu X."/>
            <person name="Xu Y."/>
            <person name="Zhang B."/>
            <person name="Peng X."/>
            <person name="Yuan J."/>
            <person name="Qiang B."/>
        </authorList>
    </citation>
    <scope>NUCLEOTIDE SEQUENCE [MRNA] (ISOFORM 1)</scope>
</reference>
<reference key="4">
    <citation type="journal article" date="2004" name="Nat. Genet.">
        <title>Complete sequencing and characterization of 21,243 full-length human cDNAs.</title>
        <authorList>
            <person name="Ota T."/>
            <person name="Suzuki Y."/>
            <person name="Nishikawa T."/>
            <person name="Otsuki T."/>
            <person name="Sugiyama T."/>
            <person name="Irie R."/>
            <person name="Wakamatsu A."/>
            <person name="Hayashi K."/>
            <person name="Sato H."/>
            <person name="Nagai K."/>
            <person name="Kimura K."/>
            <person name="Makita H."/>
            <person name="Sekine M."/>
            <person name="Obayashi M."/>
            <person name="Nishi T."/>
            <person name="Shibahara T."/>
            <person name="Tanaka T."/>
            <person name="Ishii S."/>
            <person name="Yamamoto J."/>
            <person name="Saito K."/>
            <person name="Kawai Y."/>
            <person name="Isono Y."/>
            <person name="Nakamura Y."/>
            <person name="Nagahari K."/>
            <person name="Murakami K."/>
            <person name="Yasuda T."/>
            <person name="Iwayanagi T."/>
            <person name="Wagatsuma M."/>
            <person name="Shiratori A."/>
            <person name="Sudo H."/>
            <person name="Hosoiri T."/>
            <person name="Kaku Y."/>
            <person name="Kodaira H."/>
            <person name="Kondo H."/>
            <person name="Sugawara M."/>
            <person name="Takahashi M."/>
            <person name="Kanda K."/>
            <person name="Yokoi T."/>
            <person name="Furuya T."/>
            <person name="Kikkawa E."/>
            <person name="Omura Y."/>
            <person name="Abe K."/>
            <person name="Kamihara K."/>
            <person name="Katsuta N."/>
            <person name="Sato K."/>
            <person name="Tanikawa M."/>
            <person name="Yamazaki M."/>
            <person name="Ninomiya K."/>
            <person name="Ishibashi T."/>
            <person name="Yamashita H."/>
            <person name="Murakawa K."/>
            <person name="Fujimori K."/>
            <person name="Tanai H."/>
            <person name="Kimata M."/>
            <person name="Watanabe M."/>
            <person name="Hiraoka S."/>
            <person name="Chiba Y."/>
            <person name="Ishida S."/>
            <person name="Ono Y."/>
            <person name="Takiguchi S."/>
            <person name="Watanabe S."/>
            <person name="Yosida M."/>
            <person name="Hotuta T."/>
            <person name="Kusano J."/>
            <person name="Kanehori K."/>
            <person name="Takahashi-Fujii A."/>
            <person name="Hara H."/>
            <person name="Tanase T.-O."/>
            <person name="Nomura Y."/>
            <person name="Togiya S."/>
            <person name="Komai F."/>
            <person name="Hara R."/>
            <person name="Takeuchi K."/>
            <person name="Arita M."/>
            <person name="Imose N."/>
            <person name="Musashino K."/>
            <person name="Yuuki H."/>
            <person name="Oshima A."/>
            <person name="Sasaki N."/>
            <person name="Aotsuka S."/>
            <person name="Yoshikawa Y."/>
            <person name="Matsunawa H."/>
            <person name="Ichihara T."/>
            <person name="Shiohata N."/>
            <person name="Sano S."/>
            <person name="Moriya S."/>
            <person name="Momiyama H."/>
            <person name="Satoh N."/>
            <person name="Takami S."/>
            <person name="Terashima Y."/>
            <person name="Suzuki O."/>
            <person name="Nakagawa S."/>
            <person name="Senoh A."/>
            <person name="Mizoguchi H."/>
            <person name="Goto Y."/>
            <person name="Shimizu F."/>
            <person name="Wakebe H."/>
            <person name="Hishigaki H."/>
            <person name="Watanabe T."/>
            <person name="Sugiyama A."/>
            <person name="Takemoto M."/>
            <person name="Kawakami B."/>
            <person name="Yamazaki M."/>
            <person name="Watanabe K."/>
            <person name="Kumagai A."/>
            <person name="Itakura S."/>
            <person name="Fukuzumi Y."/>
            <person name="Fujimori Y."/>
            <person name="Komiyama M."/>
            <person name="Tashiro H."/>
            <person name="Tanigami A."/>
            <person name="Fujiwara T."/>
            <person name="Ono T."/>
            <person name="Yamada K."/>
            <person name="Fujii Y."/>
            <person name="Ozaki K."/>
            <person name="Hirao M."/>
            <person name="Ohmori Y."/>
            <person name="Kawabata A."/>
            <person name="Hikiji T."/>
            <person name="Kobatake N."/>
            <person name="Inagaki H."/>
            <person name="Ikema Y."/>
            <person name="Okamoto S."/>
            <person name="Okitani R."/>
            <person name="Kawakami T."/>
            <person name="Noguchi S."/>
            <person name="Itoh T."/>
            <person name="Shigeta K."/>
            <person name="Senba T."/>
            <person name="Matsumura K."/>
            <person name="Nakajima Y."/>
            <person name="Mizuno T."/>
            <person name="Morinaga M."/>
            <person name="Sasaki M."/>
            <person name="Togashi T."/>
            <person name="Oyama M."/>
            <person name="Hata H."/>
            <person name="Watanabe M."/>
            <person name="Komatsu T."/>
            <person name="Mizushima-Sugano J."/>
            <person name="Satoh T."/>
            <person name="Shirai Y."/>
            <person name="Takahashi Y."/>
            <person name="Nakagawa K."/>
            <person name="Okumura K."/>
            <person name="Nagase T."/>
            <person name="Nomura N."/>
            <person name="Kikuchi H."/>
            <person name="Masuho Y."/>
            <person name="Yamashita R."/>
            <person name="Nakai K."/>
            <person name="Yada T."/>
            <person name="Nakamura Y."/>
            <person name="Ohara O."/>
            <person name="Isogai T."/>
            <person name="Sugano S."/>
        </authorList>
    </citation>
    <scope>NUCLEOTIDE SEQUENCE [LARGE SCALE MRNA] (ISOFORM 2)</scope>
    <source>
        <tissue>Lung</tissue>
    </source>
</reference>
<reference key="5">
    <citation type="journal article" date="2006" name="Nature">
        <title>Human chromosome 11 DNA sequence and analysis including novel gene identification.</title>
        <authorList>
            <person name="Taylor T.D."/>
            <person name="Noguchi H."/>
            <person name="Totoki Y."/>
            <person name="Toyoda A."/>
            <person name="Kuroki Y."/>
            <person name="Dewar K."/>
            <person name="Lloyd C."/>
            <person name="Itoh T."/>
            <person name="Takeda T."/>
            <person name="Kim D.-W."/>
            <person name="She X."/>
            <person name="Barlow K.F."/>
            <person name="Bloom T."/>
            <person name="Bruford E."/>
            <person name="Chang J.L."/>
            <person name="Cuomo C.A."/>
            <person name="Eichler E."/>
            <person name="FitzGerald M.G."/>
            <person name="Jaffe D.B."/>
            <person name="LaButti K."/>
            <person name="Nicol R."/>
            <person name="Park H.-S."/>
            <person name="Seaman C."/>
            <person name="Sougnez C."/>
            <person name="Yang X."/>
            <person name="Zimmer A.R."/>
            <person name="Zody M.C."/>
            <person name="Birren B.W."/>
            <person name="Nusbaum C."/>
            <person name="Fujiyama A."/>
            <person name="Hattori M."/>
            <person name="Rogers J."/>
            <person name="Lander E.S."/>
            <person name="Sakaki Y."/>
        </authorList>
    </citation>
    <scope>NUCLEOTIDE SEQUENCE [LARGE SCALE GENOMIC DNA]</scope>
</reference>
<reference key="6">
    <citation type="submission" date="2005-07" db="EMBL/GenBank/DDBJ databases">
        <authorList>
            <person name="Mural R.J."/>
            <person name="Istrail S."/>
            <person name="Sutton G."/>
            <person name="Florea L."/>
            <person name="Halpern A.L."/>
            <person name="Mobarry C.M."/>
            <person name="Lippert R."/>
            <person name="Walenz B."/>
            <person name="Shatkay H."/>
            <person name="Dew I."/>
            <person name="Miller J.R."/>
            <person name="Flanigan M.J."/>
            <person name="Edwards N.J."/>
            <person name="Bolanos R."/>
            <person name="Fasulo D."/>
            <person name="Halldorsson B.V."/>
            <person name="Hannenhalli S."/>
            <person name="Turner R."/>
            <person name="Yooseph S."/>
            <person name="Lu F."/>
            <person name="Nusskern D.R."/>
            <person name="Shue B.C."/>
            <person name="Zheng X.H."/>
            <person name="Zhong F."/>
            <person name="Delcher A.L."/>
            <person name="Huson D.H."/>
            <person name="Kravitz S.A."/>
            <person name="Mouchard L."/>
            <person name="Reinert K."/>
            <person name="Remington K.A."/>
            <person name="Clark A.G."/>
            <person name="Waterman M.S."/>
            <person name="Eichler E.E."/>
            <person name="Adams M.D."/>
            <person name="Hunkapiller M.W."/>
            <person name="Myers E.W."/>
            <person name="Venter J.C."/>
        </authorList>
    </citation>
    <scope>NUCLEOTIDE SEQUENCE [LARGE SCALE GENOMIC DNA]</scope>
</reference>
<reference key="7">
    <citation type="journal article" date="2004" name="Genome Res.">
        <title>The status, quality, and expansion of the NIH full-length cDNA project: the Mammalian Gene Collection (MGC).</title>
        <authorList>
            <consortium name="The MGC Project Team"/>
        </authorList>
    </citation>
    <scope>NUCLEOTIDE SEQUENCE [LARGE SCALE MRNA] (ISOFORM 1)</scope>
    <source>
        <tissue>Kidney</tissue>
    </source>
</reference>
<reference key="8">
    <citation type="journal article" date="2016" name="Mol. Cell. Biol.">
        <title>Cytokine-like factor 1, an essential facilitator of cardiotrophin-like cytokine:ciliary neurotrophic factor receptor alpha signaling and sorLA-mediated turnover.</title>
        <authorList>
            <person name="Larsen J.V."/>
            <person name="Kristensen A.M."/>
            <person name="Pallesen L.T."/>
            <person name="Bauer J."/>
            <person name="Vaegter C.B."/>
            <person name="Nielsen M.S."/>
            <person name="Madsen P."/>
            <person name="Petersen C.M."/>
        </authorList>
    </citation>
    <scope>FUNCTION</scope>
    <scope>INTERACTION WITH CRLF1; CNTFR AND SORL1</scope>
</reference>
<reference key="9">
    <citation type="journal article" date="2006" name="Proc. Natl. Acad. Sci. U.S.A.">
        <title>Inactivation of cardiotrophin-like cytokine, a second ligand for ciliary neurotrophic factor receptor, leads to cold-induced sweating syndrome in a patient.</title>
        <authorList>
            <person name="Rousseau F."/>
            <person name="Gauchat J.-F."/>
            <person name="McLeod J.G."/>
            <person name="Chevalier S."/>
            <person name="Guillet C."/>
            <person name="Guilhot F."/>
            <person name="Cognet I."/>
            <person name="Froger J."/>
            <person name="Hahn A.F."/>
            <person name="Knappskog P.M."/>
            <person name="Gascan H."/>
            <person name="Boman H."/>
        </authorList>
    </citation>
    <scope>VARIANT CISS2 LEU-197</scope>
    <scope>CHARACTERIZATION OF VARIANT CISS2 LEU-197</scope>
</reference>
<sequence>MDLRAGDSWGMLACLCTVLWHLPAVPALNRTGDPGPGPSIQKTYDLTRYLEHQLRSLAGTYLNYLGPPFNEPDFNPPRLGAETLPRATVDLEVWRSLNDKLRLTQNYEAYSHLLCYLRGLNRQAATAELRRSLAHFCTSLQGLLGSIAGVMAALGYPLPQPLPGTEPTWTPGPAHSDFLQKMDDFWLLKELQTWLWRSAKDFNRLKKKMQPPAAAVTLHLGAHGF</sequence>
<proteinExistence type="evidence at protein level"/>
<comment type="function">
    <text evidence="3 4 9">In complex with CRLF1, forms a heterodimeric neurotropic cytokine that plays a crucial role during neuronal development (Probable). Also stimulates B-cells. Binds to and activates the ILST/gp130 receptor.</text>
</comment>
<comment type="subunit">
    <text evidence="6">Forms a heteromeric complex with cardiotrophin-like cytokine CRLF1/CLF-1; the CRLF1-CLCF1 complex is a ligand for the ciliary neurotrophic factor receptor/CNTFR (PubMed:26858303). The CRLF1-CLCF1 heterodimer binds SORL1 (via N-terminal ectodomain); within this complex, the interaction is mediated predominantly by the CRLF1 moiety (PubMed:26858303). The tripartite signaling complex formed by CRLF1, CLCF1 and CNTFR also binds SORL1 (PubMed:26858303).</text>
</comment>
<comment type="interaction">
    <interactant intactId="EBI-2880701">
        <id>Q9UBD9</id>
    </interactant>
    <interactant intactId="EBI-1222467">
        <id>P02649</id>
        <label>APOE</label>
    </interactant>
    <organismsDiffer>false</organismsDiffer>
    <experiments>3</experiments>
</comment>
<comment type="interaction">
    <interactant intactId="EBI-25298664">
        <id>PRO_0000015616</id>
    </interactant>
    <interactant intactId="EBI-743758">
        <id>P26992</id>
        <label>CNTFR</label>
    </interactant>
    <organismsDiffer>false</organismsDiffer>
    <experiments>3</experiments>
</comment>
<comment type="subcellular location">
    <subcellularLocation>
        <location evidence="1">Secreted</location>
    </subcellularLocation>
</comment>
<comment type="alternative products">
    <event type="alternative splicing"/>
    <isoform>
        <id>Q9UBD9-1</id>
        <name>1</name>
        <sequence type="displayed"/>
    </isoform>
    <isoform>
        <id>Q9UBD9-2</id>
        <name>2</name>
        <sequence type="described" ref="VSP_044269"/>
    </isoform>
</comment>
<comment type="tissue specificity">
    <text evidence="3 4">Expressed predominantly in lymph nodes, spleen, peripheral blood lymphocytes, bone marrow, and fetal liver.</text>
</comment>
<comment type="disease" evidence="5">
    <disease id="DI-01357">
        <name>Crisponi/Cold-induced sweating syndrome 2</name>
        <acronym>CISS2</acronym>
        <description>An autosomal recessive disorder characterized by profuse sweating induced by cool surroundings (temperatures of 7 to 18 degrees Celsius). Patients manifest, in the neonatal period, orofacial weakness with impaired sucking and swallowing, resulting in poor feeding. Affected infants show a tendency to startle, with contractions of the facial muscles in response to tactile stimuli or during crying, trismus, abundant salivation, and opisthotonus. These features are referred to as Crisponi syndrome and can result in early death in infancy. Patients who survive into childhood have hyperhidrosis, mainly of the upper body, in response to cold temperatures, and sweat very little with heat. Additional abnormalities include a high-arched palate, nasal voice, depressed nasal bridge, inability to fully extend the elbows and kyphoscoliosis.</description>
        <dbReference type="MIM" id="610313"/>
    </disease>
    <text>The disease is caused by variants affecting the gene represented in this entry.</text>
</comment>
<comment type="similarity">
    <text evidence="8">Belongs to the IL-6 superfamily.</text>
</comment>
<organism>
    <name type="scientific">Homo sapiens</name>
    <name type="common">Human</name>
    <dbReference type="NCBI Taxonomy" id="9606"/>
    <lineage>
        <taxon>Eukaryota</taxon>
        <taxon>Metazoa</taxon>
        <taxon>Chordata</taxon>
        <taxon>Craniata</taxon>
        <taxon>Vertebrata</taxon>
        <taxon>Euteleostomi</taxon>
        <taxon>Mammalia</taxon>
        <taxon>Eutheria</taxon>
        <taxon>Euarchontoglires</taxon>
        <taxon>Primates</taxon>
        <taxon>Haplorrhini</taxon>
        <taxon>Catarrhini</taxon>
        <taxon>Hominidae</taxon>
        <taxon>Homo</taxon>
    </lineage>
</organism>
<gene>
    <name type="primary">CLCF1</name>
    <name type="synonym">BSF3</name>
    <name type="synonym">CLC</name>
    <name type="synonym">NNT1</name>
</gene>
<feature type="signal peptide" evidence="2">
    <location>
        <begin position="1"/>
        <end position="27"/>
    </location>
</feature>
<feature type="chain" id="PRO_0000015616" description="Cardiotrophin-like cytokine factor 1">
    <location>
        <begin position="28"/>
        <end position="225"/>
    </location>
</feature>
<feature type="glycosylation site" description="N-linked (GlcNAc...) asparagine" evidence="2">
    <location>
        <position position="29"/>
    </location>
</feature>
<feature type="splice variant" id="VSP_044269" description="In isoform 2." evidence="7">
    <location>
        <begin position="1"/>
        <end position="10"/>
    </location>
</feature>
<feature type="sequence variant" id="VAR_028354" description="In CISS2; heterozygous compound with a nonsense mutation; unable to bind CNTFR alpha; dbSNP:rs104894203." evidence="5">
    <original>R</original>
    <variation>L</variation>
    <location>
        <position position="197"/>
    </location>
</feature>
<feature type="sequence conflict" description="In Ref. 7; AAH66231." evidence="8" ref="7">
    <original>P</original>
    <variation>L</variation>
    <location>
        <position position="23"/>
    </location>
</feature>
<feature type="sequence conflict" description="In Ref. 7; AAH66231." evidence="8" ref="7">
    <original>L</original>
    <variation>P</variation>
    <location>
        <position position="218"/>
    </location>
</feature>
<feature type="helix" evidence="10">
    <location>
        <begin position="36"/>
        <end position="65"/>
    </location>
</feature>
<feature type="helix" evidence="10">
    <location>
        <begin position="68"/>
        <end position="70"/>
    </location>
</feature>
<feature type="strand" evidence="10">
    <location>
        <begin position="71"/>
        <end position="73"/>
    </location>
</feature>
<feature type="helix" evidence="10">
    <location>
        <begin position="91"/>
        <end position="96"/>
    </location>
</feature>
<feature type="helix" evidence="10">
    <location>
        <begin position="101"/>
        <end position="119"/>
    </location>
</feature>
<feature type="helix" evidence="10">
    <location>
        <begin position="120"/>
        <end position="122"/>
    </location>
</feature>
<feature type="helix" evidence="10">
    <location>
        <begin position="127"/>
        <end position="153"/>
    </location>
</feature>
<feature type="strand" evidence="10">
    <location>
        <begin position="165"/>
        <end position="169"/>
    </location>
</feature>
<feature type="helix" evidence="10">
    <location>
        <begin position="177"/>
        <end position="207"/>
    </location>
</feature>
<protein>
    <recommendedName>
        <fullName>Cardiotrophin-like cytokine factor 1</fullName>
    </recommendedName>
    <alternativeName>
        <fullName>B-cell-stimulating factor 3</fullName>
        <shortName>BSF-3</shortName>
    </alternativeName>
    <alternativeName>
        <fullName>Novel neurotrophin-1</fullName>
        <shortName>NNT-1</shortName>
    </alternativeName>
</protein>
<evidence type="ECO:0000250" key="1"/>
<evidence type="ECO:0000255" key="2"/>
<evidence type="ECO:0000269" key="3">
    <source>
    </source>
</evidence>
<evidence type="ECO:0000269" key="4">
    <source>
    </source>
</evidence>
<evidence type="ECO:0000269" key="5">
    <source>
    </source>
</evidence>
<evidence type="ECO:0000269" key="6">
    <source>
    </source>
</evidence>
<evidence type="ECO:0000303" key="7">
    <source>
    </source>
</evidence>
<evidence type="ECO:0000305" key="8"/>
<evidence type="ECO:0000305" key="9">
    <source>
    </source>
</evidence>
<evidence type="ECO:0007829" key="10">
    <source>
        <dbReference type="PDB" id="8D7H"/>
    </source>
</evidence>